<proteinExistence type="inferred from homology"/>
<reference key="1">
    <citation type="journal article" date="2009" name="Genome Res.">
        <title>Comparative genomics of protoploid Saccharomycetaceae.</title>
        <authorList>
            <consortium name="The Genolevures Consortium"/>
            <person name="Souciet J.-L."/>
            <person name="Dujon B."/>
            <person name="Gaillardin C."/>
            <person name="Johnston M."/>
            <person name="Baret P.V."/>
            <person name="Cliften P."/>
            <person name="Sherman D.J."/>
            <person name="Weissenbach J."/>
            <person name="Westhof E."/>
            <person name="Wincker P."/>
            <person name="Jubin C."/>
            <person name="Poulain J."/>
            <person name="Barbe V."/>
            <person name="Segurens B."/>
            <person name="Artiguenave F."/>
            <person name="Anthouard V."/>
            <person name="Vacherie B."/>
            <person name="Val M.-E."/>
            <person name="Fulton R.S."/>
            <person name="Minx P."/>
            <person name="Wilson R."/>
            <person name="Durrens P."/>
            <person name="Jean G."/>
            <person name="Marck C."/>
            <person name="Martin T."/>
            <person name="Nikolski M."/>
            <person name="Rolland T."/>
            <person name="Seret M.-L."/>
            <person name="Casaregola S."/>
            <person name="Despons L."/>
            <person name="Fairhead C."/>
            <person name="Fischer G."/>
            <person name="Lafontaine I."/>
            <person name="Leh V."/>
            <person name="Lemaire M."/>
            <person name="de Montigny J."/>
            <person name="Neuveglise C."/>
            <person name="Thierry A."/>
            <person name="Blanc-Lenfle I."/>
            <person name="Bleykasten C."/>
            <person name="Diffels J."/>
            <person name="Fritsch E."/>
            <person name="Frangeul L."/>
            <person name="Goeffon A."/>
            <person name="Jauniaux N."/>
            <person name="Kachouri-Lafond R."/>
            <person name="Payen C."/>
            <person name="Potier S."/>
            <person name="Pribylova L."/>
            <person name="Ozanne C."/>
            <person name="Richard G.-F."/>
            <person name="Sacerdot C."/>
            <person name="Straub M.-L."/>
            <person name="Talla E."/>
        </authorList>
    </citation>
    <scope>NUCLEOTIDE SEQUENCE [LARGE SCALE GENOMIC DNA]</scope>
    <source>
        <strain>ATCC 56472 / CBS 6340 / NRRL Y-8284</strain>
    </source>
</reference>
<accession>C5DEI4</accession>
<comment type="function">
    <text evidence="1">Assembly factor required for Rieske Fe-S protein RIP1 incorporation into the cytochrome b-c1 (CIII) complex. Functions as a chaperone, binding to this subunit within the mitochondrial matrix and stabilizing it prior to its translocation and insertion into the late CIII dimeric intermediate within the mitochondrial inner membrane. Modulates the mitochondrial matrix zinc pool (By similarity).</text>
</comment>
<comment type="subunit">
    <text evidence="1">Interacts with RIP1.</text>
</comment>
<comment type="subcellular location">
    <subcellularLocation>
        <location evidence="1">Mitochondrion matrix</location>
    </subcellularLocation>
</comment>
<comment type="similarity">
    <text evidence="3">Belongs to the complex I LYR family. MZM1 subfamily.</text>
</comment>
<evidence type="ECO:0000250" key="1"/>
<evidence type="ECO:0000255" key="2"/>
<evidence type="ECO:0000305" key="3"/>
<organism>
    <name type="scientific">Lachancea thermotolerans (strain ATCC 56472 / CBS 6340 / NRRL Y-8284)</name>
    <name type="common">Yeast</name>
    <name type="synonym">Kluyveromyces thermotolerans</name>
    <dbReference type="NCBI Taxonomy" id="559295"/>
    <lineage>
        <taxon>Eukaryota</taxon>
        <taxon>Fungi</taxon>
        <taxon>Dikarya</taxon>
        <taxon>Ascomycota</taxon>
        <taxon>Saccharomycotina</taxon>
        <taxon>Saccharomycetes</taxon>
        <taxon>Saccharomycetales</taxon>
        <taxon>Saccharomycetaceae</taxon>
        <taxon>Lachancea</taxon>
    </lineage>
</organism>
<keyword id="KW-0143">Chaperone</keyword>
<keyword id="KW-0496">Mitochondrion</keyword>
<keyword id="KW-1185">Reference proteome</keyword>
<keyword id="KW-0809">Transit peptide</keyword>
<name>MZM1_LACTC</name>
<gene>
    <name type="primary">MZM1</name>
    <name type="ordered locus">KLTH0C09482g</name>
</gene>
<sequence length="118" mass="12952">MSTSSMALAAYRNGLRATKVAFGQDLRMLQAARSKMREGMANPPNPELAPEQQIQHLNEVSQFLRRNIVQGKRGEGDKYTLNIHKETELGDNETIKTTKKTLVSRGGGCCGGGQGLYK</sequence>
<feature type="transit peptide" description="Mitochondrion" evidence="2">
    <location>
        <begin position="1"/>
        <end status="unknown"/>
    </location>
</feature>
<feature type="chain" id="PRO_0000405496" description="Mitochondrial zinc maintenance protein 1, mitochondrial">
    <location>
        <begin status="unknown"/>
        <end position="118"/>
    </location>
</feature>
<protein>
    <recommendedName>
        <fullName>Mitochondrial zinc maintenance protein 1, mitochondrial</fullName>
    </recommendedName>
</protein>
<dbReference type="EMBL" id="CU928167">
    <property type="protein sequence ID" value="CAR22195.1"/>
    <property type="molecule type" value="Genomic_DNA"/>
</dbReference>
<dbReference type="RefSeq" id="XP_002552633.1">
    <property type="nucleotide sequence ID" value="XM_002552587.1"/>
</dbReference>
<dbReference type="SMR" id="C5DEI4"/>
<dbReference type="FunCoup" id="C5DEI4">
    <property type="interactions" value="27"/>
</dbReference>
<dbReference type="STRING" id="559295.C5DEI4"/>
<dbReference type="GeneID" id="8291511"/>
<dbReference type="KEGG" id="lth:KLTH0C09482g"/>
<dbReference type="eggNOG" id="ENOG502S6EF">
    <property type="taxonomic scope" value="Eukaryota"/>
</dbReference>
<dbReference type="HOGENOM" id="CLU_147114_2_2_1"/>
<dbReference type="InParanoid" id="C5DEI4"/>
<dbReference type="OMA" id="KYKLRIH"/>
<dbReference type="OrthoDB" id="529194at2759"/>
<dbReference type="Proteomes" id="UP000002036">
    <property type="component" value="Chromosome C"/>
</dbReference>
<dbReference type="GO" id="GO:0005759">
    <property type="term" value="C:mitochondrial matrix"/>
    <property type="evidence" value="ECO:0007669"/>
    <property type="project" value="UniProtKB-SubCell"/>
</dbReference>
<dbReference type="GO" id="GO:0044183">
    <property type="term" value="F:protein folding chaperone"/>
    <property type="evidence" value="ECO:0007669"/>
    <property type="project" value="TreeGrafter"/>
</dbReference>
<dbReference type="GO" id="GO:0034551">
    <property type="term" value="P:mitochondrial respiratory chain complex III assembly"/>
    <property type="evidence" value="ECO:0007669"/>
    <property type="project" value="InterPro"/>
</dbReference>
<dbReference type="CDD" id="cd20267">
    <property type="entry name" value="Complex1_LYR_LYRM7"/>
    <property type="match status" value="1"/>
</dbReference>
<dbReference type="InterPro" id="IPR045298">
    <property type="entry name" value="Complex1_LYR_LYRM7"/>
</dbReference>
<dbReference type="InterPro" id="IPR050435">
    <property type="entry name" value="MZM1/LYRM7"/>
</dbReference>
<dbReference type="PANTHER" id="PTHR46749">
    <property type="entry name" value="COMPLEX III ASSEMBLY FACTOR LYRM7"/>
    <property type="match status" value="1"/>
</dbReference>
<dbReference type="PANTHER" id="PTHR46749:SF1">
    <property type="entry name" value="COMPLEX III ASSEMBLY FACTOR LYRM7"/>
    <property type="match status" value="1"/>
</dbReference>